<accession>Q8D2E8</accession>
<sequence length="207" mass="24826">MKKNMYYAISAPSGTGKSSLIKTFLNTNLGMNFRLSISHTTRNIRSEEIEGKDYFFISKEKFKKMIFEKKFIEYTYSFNNYYGTSFKEVKNKIKSNFSLFFDVNYKGVKKIKEFIPKLISIFILPPSKLDLLKRLYNRYNSNEFELNKRFYKYKKDILNYNKYDFILINRDFNNTLNKIKTIIISKNKKAINQIDKINETIKKLLKK</sequence>
<reference key="1">
    <citation type="journal article" date="2002" name="Nat. Genet.">
        <title>Genome sequence of the endocellular obligate symbiont of tsetse flies, Wigglesworthia glossinidia.</title>
        <authorList>
            <person name="Akman L."/>
            <person name="Yamashita A."/>
            <person name="Watanabe H."/>
            <person name="Oshima K."/>
            <person name="Shiba T."/>
            <person name="Hattori M."/>
            <person name="Aksoy S."/>
        </authorList>
    </citation>
    <scope>NUCLEOTIDE SEQUENCE [LARGE SCALE GENOMIC DNA]</scope>
</reference>
<comment type="function">
    <text evidence="1">Essential for recycling GMP and indirectly, cGMP.</text>
</comment>
<comment type="catalytic activity">
    <reaction evidence="1">
        <text>GMP + ATP = GDP + ADP</text>
        <dbReference type="Rhea" id="RHEA:20780"/>
        <dbReference type="ChEBI" id="CHEBI:30616"/>
        <dbReference type="ChEBI" id="CHEBI:58115"/>
        <dbReference type="ChEBI" id="CHEBI:58189"/>
        <dbReference type="ChEBI" id="CHEBI:456216"/>
        <dbReference type="EC" id="2.7.4.8"/>
    </reaction>
</comment>
<comment type="subcellular location">
    <subcellularLocation>
        <location evidence="1">Cytoplasm</location>
    </subcellularLocation>
</comment>
<comment type="similarity">
    <text evidence="1">Belongs to the guanylate kinase family.</text>
</comment>
<gene>
    <name evidence="1" type="primary">gmk</name>
    <name type="ordered locus">WIGBR4060</name>
</gene>
<evidence type="ECO:0000255" key="1">
    <source>
        <dbReference type="HAMAP-Rule" id="MF_00328"/>
    </source>
</evidence>
<proteinExistence type="inferred from homology"/>
<protein>
    <recommendedName>
        <fullName evidence="1">Guanylate kinase</fullName>
        <ecNumber evidence="1">2.7.4.8</ecNumber>
    </recommendedName>
    <alternativeName>
        <fullName evidence="1">GMP kinase</fullName>
    </alternativeName>
</protein>
<name>KGUA_WIGBR</name>
<keyword id="KW-0067">ATP-binding</keyword>
<keyword id="KW-0963">Cytoplasm</keyword>
<keyword id="KW-0418">Kinase</keyword>
<keyword id="KW-0547">Nucleotide-binding</keyword>
<keyword id="KW-1185">Reference proteome</keyword>
<keyword id="KW-0808">Transferase</keyword>
<dbReference type="EC" id="2.7.4.8" evidence="1"/>
<dbReference type="EMBL" id="BA000021">
    <property type="protein sequence ID" value="BAC24552.1"/>
    <property type="molecule type" value="Genomic_DNA"/>
</dbReference>
<dbReference type="SMR" id="Q8D2E8"/>
<dbReference type="STRING" id="36870.gene:10368907"/>
<dbReference type="KEGG" id="wbr:gmk"/>
<dbReference type="eggNOG" id="COG0194">
    <property type="taxonomic scope" value="Bacteria"/>
</dbReference>
<dbReference type="HOGENOM" id="CLU_001715_1_0_6"/>
<dbReference type="OrthoDB" id="9808150at2"/>
<dbReference type="Proteomes" id="UP000000562">
    <property type="component" value="Chromosome"/>
</dbReference>
<dbReference type="GO" id="GO:0005829">
    <property type="term" value="C:cytosol"/>
    <property type="evidence" value="ECO:0007669"/>
    <property type="project" value="TreeGrafter"/>
</dbReference>
<dbReference type="GO" id="GO:0005524">
    <property type="term" value="F:ATP binding"/>
    <property type="evidence" value="ECO:0007669"/>
    <property type="project" value="UniProtKB-UniRule"/>
</dbReference>
<dbReference type="GO" id="GO:0004385">
    <property type="term" value="F:guanylate kinase activity"/>
    <property type="evidence" value="ECO:0007669"/>
    <property type="project" value="UniProtKB-UniRule"/>
</dbReference>
<dbReference type="CDD" id="cd00071">
    <property type="entry name" value="GMPK"/>
    <property type="match status" value="1"/>
</dbReference>
<dbReference type="FunFam" id="3.30.63.10:FF:000002">
    <property type="entry name" value="Guanylate kinase 1"/>
    <property type="match status" value="1"/>
</dbReference>
<dbReference type="Gene3D" id="3.30.63.10">
    <property type="entry name" value="Guanylate Kinase phosphate binding domain"/>
    <property type="match status" value="1"/>
</dbReference>
<dbReference type="Gene3D" id="3.40.50.300">
    <property type="entry name" value="P-loop containing nucleotide triphosphate hydrolases"/>
    <property type="match status" value="1"/>
</dbReference>
<dbReference type="HAMAP" id="MF_00328">
    <property type="entry name" value="Guanylate_kinase"/>
    <property type="match status" value="1"/>
</dbReference>
<dbReference type="InterPro" id="IPR008145">
    <property type="entry name" value="GK/Ca_channel_bsu"/>
</dbReference>
<dbReference type="InterPro" id="IPR008144">
    <property type="entry name" value="Guanylate_kin-like_dom"/>
</dbReference>
<dbReference type="InterPro" id="IPR017665">
    <property type="entry name" value="Guanylate_kinase"/>
</dbReference>
<dbReference type="InterPro" id="IPR020590">
    <property type="entry name" value="Guanylate_kinase_CS"/>
</dbReference>
<dbReference type="InterPro" id="IPR027417">
    <property type="entry name" value="P-loop_NTPase"/>
</dbReference>
<dbReference type="NCBIfam" id="TIGR03263">
    <property type="entry name" value="guanyl_kin"/>
    <property type="match status" value="1"/>
</dbReference>
<dbReference type="PANTHER" id="PTHR23117:SF13">
    <property type="entry name" value="GUANYLATE KINASE"/>
    <property type="match status" value="1"/>
</dbReference>
<dbReference type="PANTHER" id="PTHR23117">
    <property type="entry name" value="GUANYLATE KINASE-RELATED"/>
    <property type="match status" value="1"/>
</dbReference>
<dbReference type="Pfam" id="PF00625">
    <property type="entry name" value="Guanylate_kin"/>
    <property type="match status" value="1"/>
</dbReference>
<dbReference type="SMART" id="SM00072">
    <property type="entry name" value="GuKc"/>
    <property type="match status" value="1"/>
</dbReference>
<dbReference type="SUPFAM" id="SSF52540">
    <property type="entry name" value="P-loop containing nucleoside triphosphate hydrolases"/>
    <property type="match status" value="1"/>
</dbReference>
<dbReference type="PROSITE" id="PS00856">
    <property type="entry name" value="GUANYLATE_KINASE_1"/>
    <property type="match status" value="1"/>
</dbReference>
<dbReference type="PROSITE" id="PS50052">
    <property type="entry name" value="GUANYLATE_KINASE_2"/>
    <property type="match status" value="1"/>
</dbReference>
<feature type="chain" id="PRO_0000170640" description="Guanylate kinase">
    <location>
        <begin position="1"/>
        <end position="207"/>
    </location>
</feature>
<feature type="domain" description="Guanylate kinase-like" evidence="1">
    <location>
        <begin position="4"/>
        <end position="184"/>
    </location>
</feature>
<feature type="binding site" evidence="1">
    <location>
        <begin position="11"/>
        <end position="18"/>
    </location>
    <ligand>
        <name>ATP</name>
        <dbReference type="ChEBI" id="CHEBI:30616"/>
    </ligand>
</feature>
<organism>
    <name type="scientific">Wigglesworthia glossinidia brevipalpis</name>
    <dbReference type="NCBI Taxonomy" id="36870"/>
    <lineage>
        <taxon>Bacteria</taxon>
        <taxon>Pseudomonadati</taxon>
        <taxon>Pseudomonadota</taxon>
        <taxon>Gammaproteobacteria</taxon>
        <taxon>Enterobacterales</taxon>
        <taxon>Erwiniaceae</taxon>
        <taxon>Wigglesworthia</taxon>
    </lineage>
</organism>